<dbReference type="EMBL" id="Z49425">
    <property type="protein sequence ID" value="CAA89445.1"/>
    <property type="molecule type" value="Genomic_DNA"/>
</dbReference>
<dbReference type="EMBL" id="X87371">
    <property type="protein sequence ID" value="CAA60806.1"/>
    <property type="molecule type" value="Genomic_DNA"/>
</dbReference>
<dbReference type="EMBL" id="BK006943">
    <property type="protein sequence ID" value="DAA08652.1"/>
    <property type="molecule type" value="Genomic_DNA"/>
</dbReference>
<dbReference type="PIR" id="S55164">
    <property type="entry name" value="S55164"/>
</dbReference>
<dbReference type="RefSeq" id="NP_012386.1">
    <property type="nucleotide sequence ID" value="NM_001181582.1"/>
</dbReference>
<dbReference type="SMR" id="P47005"/>
<dbReference type="BioGRID" id="33609">
    <property type="interactions" value="87"/>
</dbReference>
<dbReference type="ComplexPortal" id="CPX-3244">
    <property type="entry name" value="SCF-Das1 ubiquitin ligase complex"/>
</dbReference>
<dbReference type="DIP" id="DIP-6404N"/>
<dbReference type="FunCoup" id="P47005">
    <property type="interactions" value="60"/>
</dbReference>
<dbReference type="IntAct" id="P47005">
    <property type="interactions" value="5"/>
</dbReference>
<dbReference type="MINT" id="P47005"/>
<dbReference type="STRING" id="4932.YJL149W"/>
<dbReference type="iPTMnet" id="P47005"/>
<dbReference type="PaxDb" id="4932-YJL149W"/>
<dbReference type="PeptideAtlas" id="P47005"/>
<dbReference type="TopDownProteomics" id="P47005"/>
<dbReference type="EnsemblFungi" id="YJL149W_mRNA">
    <property type="protein sequence ID" value="YJL149W"/>
    <property type="gene ID" value="YJL149W"/>
</dbReference>
<dbReference type="GeneID" id="853292"/>
<dbReference type="KEGG" id="sce:YJL149W"/>
<dbReference type="AGR" id="SGD:S000003685"/>
<dbReference type="SGD" id="S000003685">
    <property type="gene designation" value="DAS1"/>
</dbReference>
<dbReference type="VEuPathDB" id="FungiDB:YJL149W"/>
<dbReference type="eggNOG" id="ENOG502QRGQ">
    <property type="taxonomic scope" value="Eukaryota"/>
</dbReference>
<dbReference type="HOGENOM" id="CLU_020929_0_0_1"/>
<dbReference type="InParanoid" id="P47005"/>
<dbReference type="OMA" id="TSFDMAP"/>
<dbReference type="OrthoDB" id="2852960at2759"/>
<dbReference type="BioCyc" id="YEAST:G3O-31593-MONOMER"/>
<dbReference type="UniPathway" id="UPA00143"/>
<dbReference type="BioGRID-ORCS" id="853292">
    <property type="hits" value="1 hit in 10 CRISPR screens"/>
</dbReference>
<dbReference type="PRO" id="PR:P47005"/>
<dbReference type="Proteomes" id="UP000002311">
    <property type="component" value="Chromosome X"/>
</dbReference>
<dbReference type="RNAct" id="P47005">
    <property type="molecule type" value="protein"/>
</dbReference>
<dbReference type="GO" id="GO:0019005">
    <property type="term" value="C:SCF ubiquitin ligase complex"/>
    <property type="evidence" value="ECO:0000314"/>
    <property type="project" value="SGD"/>
</dbReference>
<dbReference type="GO" id="GO:0030674">
    <property type="term" value="F:protein-macromolecule adaptor activity"/>
    <property type="evidence" value="ECO:0000247"/>
    <property type="project" value="SGD"/>
</dbReference>
<dbReference type="GO" id="GO:0016567">
    <property type="term" value="P:protein ubiquitination"/>
    <property type="evidence" value="ECO:0007669"/>
    <property type="project" value="UniProtKB-UniPathway"/>
</dbReference>
<dbReference type="GO" id="GO:0000409">
    <property type="term" value="P:regulation of transcription by galactose"/>
    <property type="evidence" value="ECO:0000303"/>
    <property type="project" value="ComplexPortal"/>
</dbReference>
<dbReference type="GO" id="GO:0031146">
    <property type="term" value="P:SCF-dependent proteasomal ubiquitin-dependent protein catabolic process"/>
    <property type="evidence" value="ECO:0000247"/>
    <property type="project" value="SGD"/>
</dbReference>
<dbReference type="GO" id="GO:0006511">
    <property type="term" value="P:ubiquitin-dependent protein catabolic process"/>
    <property type="evidence" value="ECO:0000314"/>
    <property type="project" value="ComplexPortal"/>
</dbReference>
<dbReference type="CDD" id="cd22143">
    <property type="entry name" value="F-box_ScMDM30-like"/>
    <property type="match status" value="1"/>
</dbReference>
<dbReference type="Gene3D" id="1.20.1280.50">
    <property type="match status" value="1"/>
</dbReference>
<dbReference type="InterPro" id="IPR036047">
    <property type="entry name" value="F-box-like_dom_sf"/>
</dbReference>
<dbReference type="InterPro" id="IPR001810">
    <property type="entry name" value="F-box_dom"/>
</dbReference>
<dbReference type="Pfam" id="PF12937">
    <property type="entry name" value="F-box-like"/>
    <property type="match status" value="1"/>
</dbReference>
<dbReference type="SMART" id="SM00256">
    <property type="entry name" value="FBOX"/>
    <property type="match status" value="1"/>
</dbReference>
<dbReference type="SUPFAM" id="SSF81383">
    <property type="entry name" value="F-box domain"/>
    <property type="match status" value="1"/>
</dbReference>
<dbReference type="PROSITE" id="PS50181">
    <property type="entry name" value="FBOX"/>
    <property type="match status" value="1"/>
</dbReference>
<sequence length="663" mass="77367">MPFQDYFQKKKAAFINRNNKSNADASALRDINDININFAAKSKNYVFPLTKLPDELMQEVFSHLPQPDRLQLCLVNKRLNKIATKLLYRRIYLNDSNVVKSDFMHLAINWTLLNLPSSLKEEESRDIANCKLKKLIETLQNNIHITEVIQWIRINWDLDSTLQRSILSILCNQGKSLQRLENVTDPACNDIISNGHFSRSNVSSFDMAPPNSLPEMVVPENYIPNLTKYLSQRISSRLSHMTLFIDPLKLFNYLYPLDIKLQIIDLKLHWRREFYNNDYFVKKIRPGNPLTKLSEVFDKRTLKILTIISWNDTLLKRETEMLKDFKEFENLEDLSLISIKQDVHILVDLFSSLTNLKRLKMDFLEEYVPEPTNPHIFLSILLACSKLQFIDLRYDGLIPQIINIQENKFQLNQQCNCTNCQIVFSDILKGKIFMFPEDYYIHDLQDIAAKDIFKMMKYLSLLPYSKACDAYPSVRTQPMNLTNFVTKMNRNLLEYRNSKSQLVPKIVNNPHQHSTVTSTSTAHMSEPEMIIIDDDDDDDEINAAIPPSSDDTAATISTDLELPHESLTKRDIIMCYHALIHHFKSIYVTFLKSFPHLRFLMLNDIPTIVMEENNERIFEPVFYHYDYKSNLYGWSKESNKNLENDSNNNNNNSDTIARIATVM</sequence>
<proteinExistence type="evidence at protein level"/>
<comment type="function">
    <text evidence="1">Substrate recognition component of a SCF (SKP1-CUL1-F-box protein) E3 ubiquitin-protein ligase complex which mediates the ubiquitination and subsequent proteasomal degradation of target proteins. Probably recognizes and binds to phosphorylated target proteins (By similarity).</text>
</comment>
<comment type="pathway">
    <text>Protein modification; protein ubiquitination.</text>
</comment>
<comment type="subunit">
    <text evidence="3 4 6 7">Interacts with SKP1. Component of the probable SCF(DAS1) complex containing CDC53, SKP1, RBX1 and DAS1.</text>
</comment>
<comment type="interaction">
    <interactant intactId="EBI-26114">
        <id>P47005</id>
    </interactant>
    <interactant intactId="EBI-4090">
        <id>P52286</id>
        <label>SKP1</label>
    </interactant>
    <organismsDiffer>false</organismsDiffer>
    <experiments>4</experiments>
</comment>
<comment type="miscellaneous">
    <text evidence="5">Present with 195 molecules/cell in log phase SD medium.</text>
</comment>
<name>DAS1_YEAST</name>
<reference key="1">
    <citation type="journal article" date="1996" name="Yeast">
        <title>Sequence analysis of a 40.7 kb segment from the left arm of yeast chromosome X reveals 14 known genes and 13 new open reading frames including homologues of genes clustered on the right arm of chromosome XI.</title>
        <authorList>
            <person name="Katsoulou C."/>
            <person name="Tzermia M."/>
            <person name="Tavernarakis N."/>
            <person name="Alexandraki D."/>
        </authorList>
    </citation>
    <scope>NUCLEOTIDE SEQUENCE [GENOMIC DNA]</scope>
    <source>
        <strain>ATCC 96604 / S288c / FY1679</strain>
    </source>
</reference>
<reference key="2">
    <citation type="journal article" date="1996" name="EMBO J.">
        <title>Complete nucleotide sequence of Saccharomyces cerevisiae chromosome X.</title>
        <authorList>
            <person name="Galibert F."/>
            <person name="Alexandraki D."/>
            <person name="Baur A."/>
            <person name="Boles E."/>
            <person name="Chalwatzis N."/>
            <person name="Chuat J.-C."/>
            <person name="Coster F."/>
            <person name="Cziepluch C."/>
            <person name="de Haan M."/>
            <person name="Domdey H."/>
            <person name="Durand P."/>
            <person name="Entian K.-D."/>
            <person name="Gatius M."/>
            <person name="Goffeau A."/>
            <person name="Grivell L.A."/>
            <person name="Hennemann A."/>
            <person name="Herbert C.J."/>
            <person name="Heumann K."/>
            <person name="Hilger F."/>
            <person name="Hollenberg C.P."/>
            <person name="Huang M.-E."/>
            <person name="Jacq C."/>
            <person name="Jauniaux J.-C."/>
            <person name="Katsoulou C."/>
            <person name="Kirchrath L."/>
            <person name="Kleine K."/>
            <person name="Kordes E."/>
            <person name="Koetter P."/>
            <person name="Liebl S."/>
            <person name="Louis E.J."/>
            <person name="Manus V."/>
            <person name="Mewes H.-W."/>
            <person name="Miosga T."/>
            <person name="Obermaier B."/>
            <person name="Perea J."/>
            <person name="Pohl T.M."/>
            <person name="Portetelle D."/>
            <person name="Pujol A."/>
            <person name="Purnelle B."/>
            <person name="Ramezani Rad M."/>
            <person name="Rasmussen S.W."/>
            <person name="Rose M."/>
            <person name="Rossau R."/>
            <person name="Schaaff-Gerstenschlaeger I."/>
            <person name="Smits P.H.M."/>
            <person name="Scarcez T."/>
            <person name="Soriano N."/>
            <person name="To Van D."/>
            <person name="Tzermia M."/>
            <person name="Van Broekhoven A."/>
            <person name="Vandenbol M."/>
            <person name="Wedler H."/>
            <person name="von Wettstein D."/>
            <person name="Wambutt R."/>
            <person name="Zagulski M."/>
            <person name="Zollner A."/>
            <person name="Karpfinger-Hartl L."/>
        </authorList>
    </citation>
    <scope>NUCLEOTIDE SEQUENCE [LARGE SCALE GENOMIC DNA]</scope>
    <source>
        <strain>ATCC 204508 / S288c</strain>
    </source>
</reference>
<reference key="3">
    <citation type="journal article" date="2014" name="G3 (Bethesda)">
        <title>The reference genome sequence of Saccharomyces cerevisiae: Then and now.</title>
        <authorList>
            <person name="Engel S.R."/>
            <person name="Dietrich F.S."/>
            <person name="Fisk D.G."/>
            <person name="Binkley G."/>
            <person name="Balakrishnan R."/>
            <person name="Costanzo M.C."/>
            <person name="Dwight S.S."/>
            <person name="Hitz B.C."/>
            <person name="Karra K."/>
            <person name="Nash R.S."/>
            <person name="Weng S."/>
            <person name="Wong E.D."/>
            <person name="Lloyd P."/>
            <person name="Skrzypek M.S."/>
            <person name="Miyasato S.R."/>
            <person name="Simison M."/>
            <person name="Cherry J.M."/>
        </authorList>
    </citation>
    <scope>GENOME REANNOTATION</scope>
    <source>
        <strain>ATCC 204508 / S288c</strain>
    </source>
</reference>
<reference key="4">
    <citation type="journal article" date="1999" name="Genes Dev.">
        <title>Cdc53/cullin and the essential Hrt1 RING-H2 subunit of SCF define a ubiquitin ligase module that activates the E2 enzyme Cdc34.</title>
        <authorList>
            <person name="Seol J.H."/>
            <person name="Feldman R.M.R."/>
            <person name="Zachariae W."/>
            <person name="Shevchenko A."/>
            <person name="Correll C.C."/>
            <person name="Lyapina S."/>
            <person name="Chi Y."/>
            <person name="Galova M."/>
            <person name="Claypool J."/>
            <person name="Sandmeyer S."/>
            <person name="Nasmyth K."/>
            <person name="Shevchenko A."/>
            <person name="Deshaies R.J."/>
        </authorList>
    </citation>
    <scope>IDENTIFICATION IN SCF COMPLEX</scope>
</reference>
<reference key="5">
    <citation type="journal article" date="1999" name="Philos. Trans. R. Soc. Lond., B, Biol. Sci.">
        <title>SCF ubiquitin protein ligases and phosphorylation-dependent proteolysis.</title>
        <authorList>
            <person name="Willems A.R."/>
            <person name="Goh T."/>
            <person name="Taylor L."/>
            <person name="Chernushevich I."/>
            <person name="Shevchenko A."/>
            <person name="Tyers M."/>
        </authorList>
    </citation>
    <scope>IDENTIFICATION BY MASS SPECTROMETRY</scope>
    <scope>IDENTIFICATION IN SCF COMPLEX</scope>
</reference>
<reference key="6">
    <citation type="journal article" date="2003" name="Nature">
        <title>Global analysis of protein expression in yeast.</title>
        <authorList>
            <person name="Ghaemmaghami S."/>
            <person name="Huh W.-K."/>
            <person name="Bower K."/>
            <person name="Howson R.W."/>
            <person name="Belle A."/>
            <person name="Dephoure N."/>
            <person name="O'Shea E.K."/>
            <person name="Weissman J.S."/>
        </authorList>
    </citation>
    <scope>LEVEL OF PROTEIN EXPRESSION [LARGE SCALE ANALYSIS]</scope>
</reference>
<reference key="7">
    <citation type="journal article" date="2004" name="Proteins">
        <title>Functional interaction of 13 yeast SCF complexes with a set of yeast E2 enzymes in vitro.</title>
        <authorList>
            <person name="Kus B.M."/>
            <person name="Caldon C.E."/>
            <person name="Andorn-Broza R."/>
            <person name="Edwards A.M."/>
        </authorList>
    </citation>
    <scope>INTERACTION WITH SKP1</scope>
    <scope>RECONSTITUTION OF THE SCF(DAS1) COMPLEX</scope>
</reference>
<reference key="8">
    <citation type="journal article" date="2010" name="Proteomics">
        <title>Remodeling of the SCF complex-mediated ubiquitination system by compositional alteration of incorporated F-box proteins.</title>
        <authorList>
            <person name="Kato M."/>
            <person name="Kito K."/>
            <person name="Ota K."/>
            <person name="Ito T."/>
        </authorList>
    </citation>
    <scope>IDENTIFICATION IN THE SCF(DAS1) COMPLEX</scope>
</reference>
<accession>P47005</accession>
<accession>D6VW36</accession>
<gene>
    <name type="primary">DAS1</name>
    <name type="ordered locus">YJL149W</name>
    <name type="ORF">J0634</name>
</gene>
<protein>
    <recommendedName>
        <fullName>F-box protein DAS1</fullName>
    </recommendedName>
    <alternativeName>
        <fullName>DST1-delta 6-azauracil sensitivity protein 1</fullName>
    </alternativeName>
</protein>
<keyword id="KW-1185">Reference proteome</keyword>
<keyword id="KW-0833">Ubl conjugation pathway</keyword>
<organism>
    <name type="scientific">Saccharomyces cerevisiae (strain ATCC 204508 / S288c)</name>
    <name type="common">Baker's yeast</name>
    <dbReference type="NCBI Taxonomy" id="559292"/>
    <lineage>
        <taxon>Eukaryota</taxon>
        <taxon>Fungi</taxon>
        <taxon>Dikarya</taxon>
        <taxon>Ascomycota</taxon>
        <taxon>Saccharomycotina</taxon>
        <taxon>Saccharomycetes</taxon>
        <taxon>Saccharomycetales</taxon>
        <taxon>Saccharomycetaceae</taxon>
        <taxon>Saccharomyces</taxon>
    </lineage>
</organism>
<evidence type="ECO:0000250" key="1"/>
<evidence type="ECO:0000255" key="2">
    <source>
        <dbReference type="PROSITE-ProRule" id="PRU00080"/>
    </source>
</evidence>
<evidence type="ECO:0000269" key="3">
    <source>
    </source>
</evidence>
<evidence type="ECO:0000269" key="4">
    <source>
    </source>
</evidence>
<evidence type="ECO:0000269" key="5">
    <source>
    </source>
</evidence>
<evidence type="ECO:0000269" key="6">
    <source>
    </source>
</evidence>
<evidence type="ECO:0000269" key="7">
    <source>
    </source>
</evidence>
<feature type="chain" id="PRO_0000119971" description="F-box protein DAS1">
    <location>
        <begin position="1"/>
        <end position="663"/>
    </location>
</feature>
<feature type="domain" description="F-box" evidence="2">
    <location>
        <begin position="46"/>
        <end position="91"/>
    </location>
</feature>